<name>PAR4_RAT</name>
<keyword id="KW-0094">Blood coagulation</keyword>
<keyword id="KW-1003">Cell membrane</keyword>
<keyword id="KW-1015">Disulfide bond</keyword>
<keyword id="KW-0297">G-protein coupled receptor</keyword>
<keyword id="KW-0325">Glycoprotein</keyword>
<keyword id="KW-0356">Hemostasis</keyword>
<keyword id="KW-0472">Membrane</keyword>
<keyword id="KW-0675">Receptor</keyword>
<keyword id="KW-1185">Reference proteome</keyword>
<keyword id="KW-0732">Signal</keyword>
<keyword id="KW-0807">Transducer</keyword>
<keyword id="KW-0812">Transmembrane</keyword>
<keyword id="KW-1133">Transmembrane helix</keyword>
<evidence type="ECO:0000250" key="1"/>
<evidence type="ECO:0000255" key="2"/>
<evidence type="ECO:0000255" key="3">
    <source>
        <dbReference type="PROSITE-ProRule" id="PRU00521"/>
    </source>
</evidence>
<evidence type="ECO:0000256" key="4">
    <source>
        <dbReference type="SAM" id="MobiDB-lite"/>
    </source>
</evidence>
<evidence type="ECO:0000305" key="5"/>
<comment type="function">
    <text>Receptor for activated thrombin or trypsin coupled to G proteins that stimulate phosphoinositide hydrolysis. May play a role in platelets activation.</text>
</comment>
<comment type="subcellular location">
    <subcellularLocation>
        <location>Cell membrane</location>
        <topology>Multi-pass membrane protein</topology>
    </subcellularLocation>
</comment>
<comment type="PTM">
    <text>A proteolytic cleavage generates a new N-terminus that functions as a tethered ligand.</text>
</comment>
<comment type="similarity">
    <text evidence="3">Belongs to the G-protein coupled receptor 1 family.</text>
</comment>
<organism>
    <name type="scientific">Rattus norvegicus</name>
    <name type="common">Rat</name>
    <dbReference type="NCBI Taxonomy" id="10116"/>
    <lineage>
        <taxon>Eukaryota</taxon>
        <taxon>Metazoa</taxon>
        <taxon>Chordata</taxon>
        <taxon>Craniata</taxon>
        <taxon>Vertebrata</taxon>
        <taxon>Euteleostomi</taxon>
        <taxon>Mammalia</taxon>
        <taxon>Eutheria</taxon>
        <taxon>Euarchontoglires</taxon>
        <taxon>Glires</taxon>
        <taxon>Rodentia</taxon>
        <taxon>Myomorpha</taxon>
        <taxon>Muroidea</taxon>
        <taxon>Muridae</taxon>
        <taxon>Murinae</taxon>
        <taxon>Rattus</taxon>
    </lineage>
</organism>
<feature type="signal peptide" evidence="2">
    <location>
        <begin position="1"/>
        <end position="16"/>
    </location>
</feature>
<feature type="propeptide" id="PRO_0000012766" description="Removed for receptor activation" evidence="1">
    <location>
        <begin position="17"/>
        <end position="58"/>
    </location>
</feature>
<feature type="chain" id="PRO_0000012767" description="Proteinase-activated receptor 4">
    <location>
        <begin position="59"/>
        <end position="395"/>
    </location>
</feature>
<feature type="topological domain" description="Extracellular" evidence="2">
    <location>
        <begin position="59"/>
        <end position="93"/>
    </location>
</feature>
<feature type="transmembrane region" description="Helical; Name=1" evidence="2">
    <location>
        <begin position="94"/>
        <end position="114"/>
    </location>
</feature>
<feature type="topological domain" description="Cytoplasmic" evidence="2">
    <location>
        <begin position="115"/>
        <end position="119"/>
    </location>
</feature>
<feature type="transmembrane region" description="Helical; Name=2" evidence="2">
    <location>
        <begin position="120"/>
        <end position="140"/>
    </location>
</feature>
<feature type="topological domain" description="Extracellular" evidence="2">
    <location>
        <begin position="141"/>
        <end position="161"/>
    </location>
</feature>
<feature type="transmembrane region" description="Helical; Name=3" evidence="2">
    <location>
        <begin position="162"/>
        <end position="182"/>
    </location>
</feature>
<feature type="topological domain" description="Cytoplasmic" evidence="2">
    <location>
        <begin position="183"/>
        <end position="203"/>
    </location>
</feature>
<feature type="transmembrane region" description="Helical; Name=4" evidence="2">
    <location>
        <begin position="204"/>
        <end position="224"/>
    </location>
</feature>
<feature type="topological domain" description="Extracellular" evidence="2">
    <location>
        <begin position="225"/>
        <end position="254"/>
    </location>
</feature>
<feature type="transmembrane region" description="Helical; Name=5" evidence="2">
    <location>
        <begin position="255"/>
        <end position="275"/>
    </location>
</feature>
<feature type="topological domain" description="Cytoplasmic" evidence="2">
    <location>
        <begin position="276"/>
        <end position="295"/>
    </location>
</feature>
<feature type="transmembrane region" description="Helical; Name=6" evidence="2">
    <location>
        <begin position="296"/>
        <end position="316"/>
    </location>
</feature>
<feature type="topological domain" description="Extracellular" evidence="2">
    <location>
        <begin position="317"/>
        <end position="330"/>
    </location>
</feature>
<feature type="transmembrane region" description="Helical; Name=7" evidence="2">
    <location>
        <begin position="331"/>
        <end position="354"/>
    </location>
</feature>
<feature type="topological domain" description="Cytoplasmic" evidence="2">
    <location>
        <begin position="355"/>
        <end position="395"/>
    </location>
</feature>
<feature type="region of interest" description="Disordered" evidence="4">
    <location>
        <begin position="46"/>
        <end position="66"/>
    </location>
</feature>
<feature type="compositionally biased region" description="Basic and acidic residues" evidence="4">
    <location>
        <begin position="47"/>
        <end position="56"/>
    </location>
</feature>
<feature type="site" description="Cleavage; by thrombin" evidence="1">
    <location>
        <begin position="58"/>
        <end position="59"/>
    </location>
</feature>
<feature type="glycosylation site" description="N-linked (GlcNAc...) asparagine" evidence="2">
    <location>
        <position position="67"/>
    </location>
</feature>
<feature type="disulfide bond" evidence="3">
    <location>
        <begin position="160"/>
        <end position="239"/>
    </location>
</feature>
<feature type="sequence conflict" description="In Ref. 2; AAK58604." evidence="5" ref="2">
    <location>
        <begin position="1"/>
        <end position="9"/>
    </location>
</feature>
<feature type="sequence conflict" description="In Ref. 2; AAK58604." evidence="5" ref="2">
    <original>S</original>
    <variation>P</variation>
    <location>
        <position position="192"/>
    </location>
</feature>
<sequence length="395" mass="42943">MCWPLLYPLMLGFSISPAECQTPSIYDDVESTREGQEASLRPTVELNESKSPDKPNPRGFPGKPCANNSDTLELPASSEALLLGWVPTRLVPAIYGLVVVVGLPANGLALWVLATRVPRLPSTILLMNLAVADLLLALVLPPRLVYHLRGQRWPFGEAACRVATAALYGHMYGSVLLLAAVSLDRYLALVHSLRARALRGQRLTTILCLVAWLSAATLVLPLTFHRQTFLLAGSDRMLCHDALPLAEQTSHWRPAFICLAVLGCFVPLLAMVLCYGATLRALAANGQRYSHAVRLTALVLFSAVAAFTPSNVLLVLHYSNPSPEAWGNLYGAYVPSLALSTLNSCVDPFIYYYVSHEFREKVRAMLCRQLKASSSSQASREAGSRGTAICSSTLL</sequence>
<dbReference type="EMBL" id="AF310216">
    <property type="protein sequence ID" value="AAL26790.1"/>
    <property type="molecule type" value="mRNA"/>
</dbReference>
<dbReference type="EMBL" id="AF269246">
    <property type="protein sequence ID" value="AAK58604.2"/>
    <property type="molecule type" value="mRNA"/>
</dbReference>
<dbReference type="RefSeq" id="NP_446260.1">
    <property type="nucleotide sequence ID" value="NM_053808.1"/>
</dbReference>
<dbReference type="SMR" id="Q920E0"/>
<dbReference type="FunCoup" id="Q920E0">
    <property type="interactions" value="300"/>
</dbReference>
<dbReference type="STRING" id="10116.ENSRNOP00000065190"/>
<dbReference type="GlyCosmos" id="Q920E0">
    <property type="glycosylation" value="1 site, No reported glycans"/>
</dbReference>
<dbReference type="GlyGen" id="Q920E0">
    <property type="glycosylation" value="1 site"/>
</dbReference>
<dbReference type="PhosphoSitePlus" id="Q920E0"/>
<dbReference type="PaxDb" id="10116-ENSRNOP00000065190"/>
<dbReference type="GeneID" id="116498"/>
<dbReference type="KEGG" id="rno:116498"/>
<dbReference type="AGR" id="RGD:620872"/>
<dbReference type="CTD" id="9002"/>
<dbReference type="RGD" id="620872">
    <property type="gene designation" value="F2rl3"/>
</dbReference>
<dbReference type="eggNOG" id="ENOG502QU4Y">
    <property type="taxonomic scope" value="Eukaryota"/>
</dbReference>
<dbReference type="InParanoid" id="Q920E0"/>
<dbReference type="OrthoDB" id="62491at9989"/>
<dbReference type="PhylomeDB" id="Q920E0"/>
<dbReference type="Reactome" id="R-RNO-375276">
    <property type="pathway name" value="Peptide ligand-binding receptors"/>
</dbReference>
<dbReference type="Reactome" id="R-RNO-416476">
    <property type="pathway name" value="G alpha (q) signalling events"/>
</dbReference>
<dbReference type="Reactome" id="R-RNO-456926">
    <property type="pathway name" value="Thrombin signalling through proteinase activated receptors (PARs)"/>
</dbReference>
<dbReference type="PRO" id="PR:Q920E0"/>
<dbReference type="Proteomes" id="UP000002494">
    <property type="component" value="Unplaced"/>
</dbReference>
<dbReference type="GO" id="GO:0005886">
    <property type="term" value="C:plasma membrane"/>
    <property type="evidence" value="ECO:0000318"/>
    <property type="project" value="GO_Central"/>
</dbReference>
<dbReference type="GO" id="GO:0004930">
    <property type="term" value="F:G protein-coupled receptor activity"/>
    <property type="evidence" value="ECO:0000318"/>
    <property type="project" value="GO_Central"/>
</dbReference>
<dbReference type="GO" id="GO:0002020">
    <property type="term" value="F:protease binding"/>
    <property type="evidence" value="ECO:0000266"/>
    <property type="project" value="RGD"/>
</dbReference>
<dbReference type="GO" id="GO:0015057">
    <property type="term" value="F:thrombin-activated receptor activity"/>
    <property type="evidence" value="ECO:0007669"/>
    <property type="project" value="InterPro"/>
</dbReference>
<dbReference type="GO" id="GO:0007186">
    <property type="term" value="P:G protein-coupled receptor signaling pathway"/>
    <property type="evidence" value="ECO:0000318"/>
    <property type="project" value="GO_Central"/>
</dbReference>
<dbReference type="GO" id="GO:0030168">
    <property type="term" value="P:platelet activation"/>
    <property type="evidence" value="ECO:0000266"/>
    <property type="project" value="RGD"/>
</dbReference>
<dbReference type="GO" id="GO:0070527">
    <property type="term" value="P:platelet aggregation"/>
    <property type="evidence" value="ECO:0000266"/>
    <property type="project" value="RGD"/>
</dbReference>
<dbReference type="GO" id="GO:0051281">
    <property type="term" value="P:positive regulation of release of sequestered calcium ion into cytosol"/>
    <property type="evidence" value="ECO:0000266"/>
    <property type="project" value="RGD"/>
</dbReference>
<dbReference type="CDD" id="cd15372">
    <property type="entry name" value="7tmA_PAR4"/>
    <property type="match status" value="1"/>
</dbReference>
<dbReference type="FunFam" id="1.20.1070.10:FF:000230">
    <property type="entry name" value="F2R-like thrombin or trypsin receptor 3"/>
    <property type="match status" value="1"/>
</dbReference>
<dbReference type="Gene3D" id="1.20.1070.10">
    <property type="entry name" value="Rhodopsin 7-helix transmembrane proteins"/>
    <property type="match status" value="1"/>
</dbReference>
<dbReference type="InterPro" id="IPR000276">
    <property type="entry name" value="GPCR_Rhodpsn"/>
</dbReference>
<dbReference type="InterPro" id="IPR017452">
    <property type="entry name" value="GPCR_Rhodpsn_7TM"/>
</dbReference>
<dbReference type="InterPro" id="IPR003944">
    <property type="entry name" value="Prot_act_rcpt_4"/>
</dbReference>
<dbReference type="InterPro" id="IPR003912">
    <property type="entry name" value="Protea_act_rcpt"/>
</dbReference>
<dbReference type="PANTHER" id="PTHR24232">
    <property type="entry name" value="G-PROTEIN COUPLED RECEPTOR"/>
    <property type="match status" value="1"/>
</dbReference>
<dbReference type="PANTHER" id="PTHR24232:SF22">
    <property type="entry name" value="PROTEINASE-ACTIVATED RECEPTOR 4"/>
    <property type="match status" value="1"/>
</dbReference>
<dbReference type="Pfam" id="PF00001">
    <property type="entry name" value="7tm_1"/>
    <property type="match status" value="1"/>
</dbReference>
<dbReference type="PRINTS" id="PR00237">
    <property type="entry name" value="GPCRRHODOPSN"/>
</dbReference>
<dbReference type="PRINTS" id="PR01428">
    <property type="entry name" value="PROTEASEAR"/>
</dbReference>
<dbReference type="PRINTS" id="PR01430">
    <property type="entry name" value="PROTEASEAR4"/>
</dbReference>
<dbReference type="SUPFAM" id="SSF81321">
    <property type="entry name" value="Family A G protein-coupled receptor-like"/>
    <property type="match status" value="1"/>
</dbReference>
<dbReference type="PROSITE" id="PS00237">
    <property type="entry name" value="G_PROTEIN_RECEP_F1_1"/>
    <property type="match status" value="1"/>
</dbReference>
<dbReference type="PROSITE" id="PS50262">
    <property type="entry name" value="G_PROTEIN_RECEP_F1_2"/>
    <property type="match status" value="1"/>
</dbReference>
<gene>
    <name type="primary">F2rl3</name>
    <name type="synonym">Par4</name>
</gene>
<reference key="1">
    <citation type="submission" date="2000-10" db="EMBL/GenBank/DDBJ databases">
        <title>Proteinase activated receptor 4 from rat duodenal library.</title>
        <authorList>
            <person name="Hoogerwerf W.A."/>
            <person name="Lee-Hellmich H."/>
            <person name="Pasricha P.J."/>
        </authorList>
    </citation>
    <scope>NUCLEOTIDE SEQUENCE [MRNA]</scope>
    <source>
        <strain>Sprague-Dawley</strain>
        <tissue>Duodenum</tissue>
    </source>
</reference>
<reference key="2">
    <citation type="submission" date="2001-07" db="EMBL/GenBank/DDBJ databases">
        <title>Cloning of the rat protease activated receptor isoforms 3 and 4.</title>
        <authorList>
            <person name="Chien E.K."/>
            <person name="Marietti S."/>
            <person name="Mendoza J."/>
            <person name="Phillippe M."/>
        </authorList>
    </citation>
    <scope>NUCLEOTIDE SEQUENCE [MRNA]</scope>
    <source>
        <strain>Sprague-Dawley</strain>
        <tissue>Myometrium</tissue>
    </source>
</reference>
<proteinExistence type="evidence at transcript level"/>
<protein>
    <recommendedName>
        <fullName>Proteinase-activated receptor 4</fullName>
        <shortName>PAR-4</shortName>
    </recommendedName>
    <alternativeName>
        <fullName>Coagulation factor II receptor-like 3</fullName>
    </alternativeName>
    <alternativeName>
        <fullName>Thrombin receptor-like 3</fullName>
    </alternativeName>
</protein>
<accession>Q920E0</accession>